<sequence>MAETTPEQPLEEIDIDSYTTESEVPVEGEYTSESMASAFGEPQPAAGLGRRKNAIARVRIVPGTGKWKVNGRTLEDYFPNKVHQQEVNEPFKVLELDNRYDVIARISGGGVSGQAGALRLGVARALNEADVDNNRGALKKAGYLKRDDRAVERKKAGLKKARKAPQYSKR</sequence>
<protein>
    <recommendedName>
        <fullName evidence="2">Small ribosomal subunit protein uS9</fullName>
    </recommendedName>
    <alternativeName>
        <fullName>30S ribosomal protein S9</fullName>
    </alternativeName>
</protein>
<reference key="1">
    <citation type="journal article" date="1997" name="Mol. Gen. Genet.">
        <title>Cloning, sequencing and transcriptional analysis of a Streptomyces coelicolor operon containing the rplM and rpsI genes encoding ribosomal proteins ScoL13 and ScoS9.</title>
        <authorList>
            <person name="Sanchez C."/>
            <person name="Blanco G."/>
            <person name="Mendez C."/>
            <person name="Salas J.A."/>
        </authorList>
    </citation>
    <scope>NUCLEOTIDE SEQUENCE [GENOMIC DNA]</scope>
    <source>
        <strain>A3(2) / NRRL B-16638</strain>
    </source>
</reference>
<reference key="2">
    <citation type="journal article" date="2002" name="Nature">
        <title>Complete genome sequence of the model actinomycete Streptomyces coelicolor A3(2).</title>
        <authorList>
            <person name="Bentley S.D."/>
            <person name="Chater K.F."/>
            <person name="Cerdeno-Tarraga A.-M."/>
            <person name="Challis G.L."/>
            <person name="Thomson N.R."/>
            <person name="James K.D."/>
            <person name="Harris D.E."/>
            <person name="Quail M.A."/>
            <person name="Kieser H."/>
            <person name="Harper D."/>
            <person name="Bateman A."/>
            <person name="Brown S."/>
            <person name="Chandra G."/>
            <person name="Chen C.W."/>
            <person name="Collins M."/>
            <person name="Cronin A."/>
            <person name="Fraser A."/>
            <person name="Goble A."/>
            <person name="Hidalgo J."/>
            <person name="Hornsby T."/>
            <person name="Howarth S."/>
            <person name="Huang C.-H."/>
            <person name="Kieser T."/>
            <person name="Larke L."/>
            <person name="Murphy L.D."/>
            <person name="Oliver K."/>
            <person name="O'Neil S."/>
            <person name="Rabbinowitsch E."/>
            <person name="Rajandream M.A."/>
            <person name="Rutherford K.M."/>
            <person name="Rutter S."/>
            <person name="Seeger K."/>
            <person name="Saunders D."/>
            <person name="Sharp S."/>
            <person name="Squares R."/>
            <person name="Squares S."/>
            <person name="Taylor K."/>
            <person name="Warren T."/>
            <person name="Wietzorrek A."/>
            <person name="Woodward J.R."/>
            <person name="Barrell B.G."/>
            <person name="Parkhill J."/>
            <person name="Hopwood D.A."/>
        </authorList>
    </citation>
    <scope>NUCLEOTIDE SEQUENCE [LARGE SCALE GENOMIC DNA]</scope>
    <source>
        <strain>ATCC BAA-471 / A3(2) / M145</strain>
    </source>
</reference>
<organism>
    <name type="scientific">Streptomyces coelicolor (strain ATCC BAA-471 / A3(2) / M145)</name>
    <dbReference type="NCBI Taxonomy" id="100226"/>
    <lineage>
        <taxon>Bacteria</taxon>
        <taxon>Bacillati</taxon>
        <taxon>Actinomycetota</taxon>
        <taxon>Actinomycetes</taxon>
        <taxon>Kitasatosporales</taxon>
        <taxon>Streptomycetaceae</taxon>
        <taxon>Streptomyces</taxon>
        <taxon>Streptomyces albidoflavus group</taxon>
    </lineage>
</organism>
<gene>
    <name type="primary">rpsI</name>
    <name type="ordered locus">SCO4735</name>
    <name type="ORF">SC6G4.13</name>
</gene>
<feature type="chain" id="PRO_0000111418" description="Small ribosomal subunit protein uS9">
    <location>
        <begin position="1"/>
        <end position="170"/>
    </location>
</feature>
<feature type="region of interest" description="Disordered" evidence="1">
    <location>
        <begin position="1"/>
        <end position="47"/>
    </location>
</feature>
<accession>Q53875</accession>
<proteinExistence type="inferred from homology"/>
<keyword id="KW-1185">Reference proteome</keyword>
<keyword id="KW-0687">Ribonucleoprotein</keyword>
<keyword id="KW-0689">Ribosomal protein</keyword>
<comment type="similarity">
    <text evidence="2">Belongs to the universal ribosomal protein uS9 family.</text>
</comment>
<dbReference type="EMBL" id="U43429">
    <property type="protein sequence ID" value="AAC46061.1"/>
    <property type="molecule type" value="Genomic_DNA"/>
</dbReference>
<dbReference type="EMBL" id="AL939121">
    <property type="protein sequence ID" value="CAA20391.1"/>
    <property type="molecule type" value="Genomic_DNA"/>
</dbReference>
<dbReference type="PIR" id="T35564">
    <property type="entry name" value="T35564"/>
</dbReference>
<dbReference type="RefSeq" id="NP_628893.1">
    <property type="nucleotide sequence ID" value="NC_003888.3"/>
</dbReference>
<dbReference type="RefSeq" id="WP_003974238.1">
    <property type="nucleotide sequence ID" value="NZ_VNID01000016.1"/>
</dbReference>
<dbReference type="SMR" id="Q53875"/>
<dbReference type="FunCoup" id="Q53875">
    <property type="interactions" value="356"/>
</dbReference>
<dbReference type="STRING" id="100226.gene:17762384"/>
<dbReference type="PaxDb" id="100226-SCO4735"/>
<dbReference type="GeneID" id="96655923"/>
<dbReference type="KEGG" id="sco:SCO4735"/>
<dbReference type="PATRIC" id="fig|100226.15.peg.4806"/>
<dbReference type="eggNOG" id="COG0103">
    <property type="taxonomic scope" value="Bacteria"/>
</dbReference>
<dbReference type="HOGENOM" id="CLU_046483_2_0_11"/>
<dbReference type="InParanoid" id="Q53875"/>
<dbReference type="OrthoDB" id="9803965at2"/>
<dbReference type="PhylomeDB" id="Q53875"/>
<dbReference type="Proteomes" id="UP000001973">
    <property type="component" value="Chromosome"/>
</dbReference>
<dbReference type="GO" id="GO:0005737">
    <property type="term" value="C:cytoplasm"/>
    <property type="evidence" value="ECO:0007669"/>
    <property type="project" value="UniProtKB-ARBA"/>
</dbReference>
<dbReference type="GO" id="GO:0015935">
    <property type="term" value="C:small ribosomal subunit"/>
    <property type="evidence" value="ECO:0000318"/>
    <property type="project" value="GO_Central"/>
</dbReference>
<dbReference type="GO" id="GO:0003723">
    <property type="term" value="F:RNA binding"/>
    <property type="evidence" value="ECO:0000318"/>
    <property type="project" value="GO_Central"/>
</dbReference>
<dbReference type="GO" id="GO:0003735">
    <property type="term" value="F:structural constituent of ribosome"/>
    <property type="evidence" value="ECO:0000318"/>
    <property type="project" value="GO_Central"/>
</dbReference>
<dbReference type="GO" id="GO:0006412">
    <property type="term" value="P:translation"/>
    <property type="evidence" value="ECO:0007669"/>
    <property type="project" value="UniProtKB-UniRule"/>
</dbReference>
<dbReference type="FunFam" id="3.30.230.10:FF:000001">
    <property type="entry name" value="30S ribosomal protein S9"/>
    <property type="match status" value="1"/>
</dbReference>
<dbReference type="Gene3D" id="3.30.230.10">
    <property type="match status" value="1"/>
</dbReference>
<dbReference type="HAMAP" id="MF_00532_B">
    <property type="entry name" value="Ribosomal_uS9_B"/>
    <property type="match status" value="1"/>
</dbReference>
<dbReference type="InterPro" id="IPR020568">
    <property type="entry name" value="Ribosomal_Su5_D2-typ_SF"/>
</dbReference>
<dbReference type="InterPro" id="IPR000754">
    <property type="entry name" value="Ribosomal_uS9"/>
</dbReference>
<dbReference type="InterPro" id="IPR023035">
    <property type="entry name" value="Ribosomal_uS9_bac/plastid"/>
</dbReference>
<dbReference type="InterPro" id="IPR020574">
    <property type="entry name" value="Ribosomal_uS9_CS"/>
</dbReference>
<dbReference type="InterPro" id="IPR014721">
    <property type="entry name" value="Ribsml_uS5_D2-typ_fold_subgr"/>
</dbReference>
<dbReference type="NCBIfam" id="NF001099">
    <property type="entry name" value="PRK00132.1"/>
    <property type="match status" value="1"/>
</dbReference>
<dbReference type="PANTHER" id="PTHR21569">
    <property type="entry name" value="RIBOSOMAL PROTEIN S9"/>
    <property type="match status" value="1"/>
</dbReference>
<dbReference type="PANTHER" id="PTHR21569:SF1">
    <property type="entry name" value="SMALL RIBOSOMAL SUBUNIT PROTEIN US9M"/>
    <property type="match status" value="1"/>
</dbReference>
<dbReference type="Pfam" id="PF00380">
    <property type="entry name" value="Ribosomal_S9"/>
    <property type="match status" value="1"/>
</dbReference>
<dbReference type="SUPFAM" id="SSF54211">
    <property type="entry name" value="Ribosomal protein S5 domain 2-like"/>
    <property type="match status" value="1"/>
</dbReference>
<dbReference type="PROSITE" id="PS00360">
    <property type="entry name" value="RIBOSOMAL_S9"/>
    <property type="match status" value="1"/>
</dbReference>
<evidence type="ECO:0000256" key="1">
    <source>
        <dbReference type="SAM" id="MobiDB-lite"/>
    </source>
</evidence>
<evidence type="ECO:0000305" key="2"/>
<name>RS9_STRCO</name>